<keyword id="KW-1048">Host nucleus</keyword>
<keyword id="KW-0489">Methyltransferase</keyword>
<keyword id="KW-1185">Reference proteome</keyword>
<keyword id="KW-0949">S-adenosyl-L-methionine</keyword>
<keyword id="KW-0964">Secreted</keyword>
<keyword id="KW-0800">Toxin</keyword>
<keyword id="KW-0808">Transferase</keyword>
<keyword id="KW-0843">Virulence</keyword>
<sequence>MINPVTNTQGVSPINTKYAEHVVKNIYPKIKHDYFNESPNIYDKKYISGITRGVAELKQEEFVNEKARRFSYMKTMYSVCPEAFEPISRNEASTPEGSWLTVISGKRPMGQFSVDSLYNPDLHALCELPDICCKIFPKENNDFLYIVVVYRNDSPLGEQRANRFIELYNIKRDIMQELNYELPELKAVKSEMIIAREMGEIFSYMPGEIDSYMKYINNKLSKIE</sequence>
<gene>
    <name evidence="8" type="primary">nleE</name>
    <name type="ordered locus">E2348C_3232</name>
</gene>
<reference key="1">
    <citation type="journal article" date="2009" name="J. Bacteriol.">
        <title>Complete genome sequence and comparative genome analysis of enteropathogenic Escherichia coli O127:H6 strain E2348/69.</title>
        <authorList>
            <person name="Iguchi A."/>
            <person name="Thomson N.R."/>
            <person name="Ogura Y."/>
            <person name="Saunders D."/>
            <person name="Ooka T."/>
            <person name="Henderson I.R."/>
            <person name="Harris D."/>
            <person name="Asadulghani M."/>
            <person name="Kurokawa K."/>
            <person name="Dean P."/>
            <person name="Kenny B."/>
            <person name="Quail M.A."/>
            <person name="Thurston S."/>
            <person name="Dougan G."/>
            <person name="Hayashi T."/>
            <person name="Parkhill J."/>
            <person name="Frankel G."/>
        </authorList>
    </citation>
    <scope>NUCLEOTIDE SEQUENCE [LARGE SCALE GENOMIC DNA]</scope>
    <source>
        <strain>E2348/69 / EPEC</strain>
    </source>
</reference>
<reference key="2">
    <citation type="journal article" date="2008" name="Infect. Immun.">
        <title>The NleE/OspZ family of effector proteins is required for polymorphonuclear transepithelial migration, a characteristic shared by enteropathogenic Escherichia coli and Shigella flexneri infections.</title>
        <authorList>
            <person name="Zurawski D.V."/>
            <person name="Mumy K.L."/>
            <person name="Badea L."/>
            <person name="Prentice J.A."/>
            <person name="Hartland E.L."/>
            <person name="McCormick B.A."/>
            <person name="Maurelli A.T."/>
        </authorList>
    </citation>
    <scope>SUBCELLULAR LOCATION</scope>
    <source>
        <strain>E2348/69 / EPEC</strain>
    </source>
</reference>
<reference key="3">
    <citation type="journal article" date="2010" name="PLoS Pathog.">
        <title>The type III secretion effector NleE inhibits NF-kappaB activation.</title>
        <authorList>
            <person name="Nadler C."/>
            <person name="Baruch K."/>
            <person name="Kobi S."/>
            <person name="Mills E."/>
            <person name="Haviv G."/>
            <person name="Farago M."/>
            <person name="Alkalay I."/>
            <person name="Bartfeld S."/>
            <person name="Meyer T.F."/>
            <person name="Ben-Neriah Y."/>
            <person name="Rosenshine I."/>
        </authorList>
    </citation>
    <scope>FUNCTION</scope>
    <scope>MUTAGENESIS OF 209-ILE--LYS-214</scope>
    <source>
        <strain>E2348/69 / EPEC</strain>
    </source>
</reference>
<reference key="4">
    <citation type="journal article" date="2010" name="PLoS Pathog.">
        <title>The type III effectors NleE and NleB from enteropathogenic E. coli and OspZ from Shigella block nuclear translocation of NF-kappaB p65.</title>
        <authorList>
            <person name="Newton H.J."/>
            <person name="Pearson J.S."/>
            <person name="Badea L."/>
            <person name="Kelly M."/>
            <person name="Lucas M."/>
            <person name="Holloway G."/>
            <person name="Wagstaff K.M."/>
            <person name="Dunstone M.A."/>
            <person name="Sloan J."/>
            <person name="Whisstock J.C."/>
            <person name="Kaper J.B."/>
            <person name="Robins-Browne R.M."/>
            <person name="Jans D.A."/>
            <person name="Frankel G."/>
            <person name="Phillips A.D."/>
            <person name="Coulson B.S."/>
            <person name="Hartland E.L."/>
        </authorList>
    </citation>
    <scope>FUNCTION</scope>
    <source>
        <strain>E2348/69 / EPEC</strain>
    </source>
</reference>
<reference key="5">
    <citation type="journal article" date="2011" name="Nature">
        <title>Cysteine methylation disrupts ubiquitin-chain sensing in NF-kappaB activation.</title>
        <authorList>
            <person name="Zhang L."/>
            <person name="Ding X."/>
            <person name="Cui J."/>
            <person name="Xu H."/>
            <person name="Chen J."/>
            <person name="Gong Y.N."/>
            <person name="Hu L."/>
            <person name="Zhou Y."/>
            <person name="Ge J."/>
            <person name="Lu Q."/>
            <person name="Liu L."/>
            <person name="Chen S."/>
            <person name="Shao F."/>
        </authorList>
    </citation>
    <scope>FUNCTION</scope>
    <scope>CATALYTIC ACTIVITY</scope>
    <scope>MUTAGENESIS OF ARG-107; 209-ILE--LYS-214 AND TYR-212</scope>
    <source>
        <strain>E2348/69 / EPEC</strain>
    </source>
</reference>
<reference key="6">
    <citation type="journal article" date="2014" name="PLoS Pathog.">
        <title>Structure and specificity of the bacterial cysteine methyltransferase effector NleE suggests a novel substrate in human DNA repair pathway.</title>
        <authorList>
            <person name="Yao Q."/>
            <person name="Zhang L."/>
            <person name="Wan X."/>
            <person name="Chen J."/>
            <person name="Hu L."/>
            <person name="Ding X."/>
            <person name="Li L."/>
            <person name="Karar J."/>
            <person name="Peng H."/>
            <person name="Chen S."/>
            <person name="Huang N."/>
            <person name="Rauscher F.J. III"/>
            <person name="Shao F."/>
        </authorList>
    </citation>
    <scope>FUNCTION</scope>
    <scope>CATALYTIC ACTIVITY</scope>
    <scope>MUTAGENESIS OF ARG-107; GLU-191 AND TYR-212</scope>
    <source>
        <strain>E2348/69 / EPEC</strain>
    </source>
</reference>
<reference key="7">
    <citation type="journal article" date="2016" name="J. Biol. Chem.">
        <title>Identification of a distinct substrate-binding domain in the bacterial cysteine methyltransferase effectors NleE and OspZ.</title>
        <authorList>
            <person name="Zhang Y."/>
            <person name="Muehlen S."/>
            <person name="Oates C.V."/>
            <person name="Pearson J.S."/>
            <person name="Hartland E.L."/>
        </authorList>
    </citation>
    <scope>FUNCTION</scope>
    <scope>CATALYTIC ACTIVITY</scope>
    <scope>MUTAGENESIS OF 49-GLY--ARG-52 AND 209-ILE--LYS-214</scope>
    <source>
        <strain>E2348/69 / EPEC</strain>
    </source>
</reference>
<dbReference type="EC" id="2.1.1.-" evidence="5 6"/>
<dbReference type="EMBL" id="FM180568">
    <property type="protein sequence ID" value="CAS10780.1"/>
    <property type="molecule type" value="Genomic_DNA"/>
</dbReference>
<dbReference type="RefSeq" id="WP_000609744.1">
    <property type="nucleotide sequence ID" value="NC_011601.1"/>
</dbReference>
<dbReference type="SMR" id="B7UI22"/>
<dbReference type="DIP" id="DIP-60470N"/>
<dbReference type="IntAct" id="B7UI22">
    <property type="interactions" value="3"/>
</dbReference>
<dbReference type="KEGG" id="ecg:E2348C_3232"/>
<dbReference type="HOGENOM" id="CLU_1347196_0_0_6"/>
<dbReference type="Proteomes" id="UP000008205">
    <property type="component" value="Chromosome"/>
</dbReference>
<dbReference type="GO" id="GO:0005576">
    <property type="term" value="C:extracellular region"/>
    <property type="evidence" value="ECO:0007669"/>
    <property type="project" value="UniProtKB-SubCell"/>
</dbReference>
<dbReference type="GO" id="GO:0042025">
    <property type="term" value="C:host cell nucleus"/>
    <property type="evidence" value="ECO:0000314"/>
    <property type="project" value="UniProtKB"/>
</dbReference>
<dbReference type="GO" id="GO:0106363">
    <property type="term" value="F:protein-cysteine methyltransferase activity"/>
    <property type="evidence" value="ECO:0000314"/>
    <property type="project" value="UniProtKB"/>
</dbReference>
<dbReference type="GO" id="GO:0090729">
    <property type="term" value="F:toxin activity"/>
    <property type="evidence" value="ECO:0000314"/>
    <property type="project" value="UniProtKB"/>
</dbReference>
<dbReference type="GO" id="GO:0032259">
    <property type="term" value="P:methylation"/>
    <property type="evidence" value="ECO:0007669"/>
    <property type="project" value="UniProtKB-KW"/>
</dbReference>
<dbReference type="GO" id="GO:0085034">
    <property type="term" value="P:symbiont-mediated suppression of host NF-kappaB cascade"/>
    <property type="evidence" value="ECO:0000314"/>
    <property type="project" value="UniProtKB"/>
</dbReference>
<dbReference type="InterPro" id="IPR048901">
    <property type="entry name" value="NleE/OspZ"/>
</dbReference>
<dbReference type="NCBIfam" id="NF033830">
    <property type="entry name" value="NleE_fam_methyl"/>
    <property type="match status" value="1"/>
</dbReference>
<dbReference type="Pfam" id="PF20798">
    <property type="entry name" value="NleE"/>
    <property type="match status" value="1"/>
</dbReference>
<comment type="function">
    <text evidence="3 4 5 6 7">Cysteine methyltransferase effector that inhibits host cell NF-kappa-B activation by preventing nuclear translocation of host protein RELA/p65 (PubMed:20126447, PubMed:20485572, PubMed:22158122, PubMed:25412445, PubMed:27445336). Acts by mediating cysteine methylation of host proteins TAB2 and TAB3: methylation of a conserved cysteine residue of the RanBP2-type zinc finger (NZF) of TAB2 and TAB3 disrupts zinc-binding, thereby inactivating the ubiquitin chain-binding activity of TAB2 and TAB3, leading to NF-kappa-B inactivation (PubMed:22158122, PubMed:25412445, PubMed:27445336). Also mediates cysteine methylation of host protein ZRANB3, inactivating its ability to bind ubiquitin chains (PubMed:25412445).</text>
</comment>
<comment type="catalytic activity">
    <reaction evidence="5 6 7">
        <text>L-cysteinyl-[protein] + S-adenosyl-L-methionine = S-methyl-L-cysteinyl-[protein] + S-adenosyl-L-homocysteine + H(+)</text>
        <dbReference type="Rhea" id="RHEA:66544"/>
        <dbReference type="Rhea" id="RHEA-COMP:10131"/>
        <dbReference type="Rhea" id="RHEA-COMP:10132"/>
        <dbReference type="ChEBI" id="CHEBI:15378"/>
        <dbReference type="ChEBI" id="CHEBI:29950"/>
        <dbReference type="ChEBI" id="CHEBI:57856"/>
        <dbReference type="ChEBI" id="CHEBI:59789"/>
        <dbReference type="ChEBI" id="CHEBI:82612"/>
    </reaction>
    <physiologicalReaction direction="left-to-right" evidence="5 6 7">
        <dbReference type="Rhea" id="RHEA:66545"/>
    </physiologicalReaction>
</comment>
<comment type="subunit">
    <text evidence="1">Monomer.</text>
</comment>
<comment type="interaction">
    <interactant intactId="EBI-15957770">
        <id>B7UI22</id>
    </interactant>
    <interactant intactId="EBI-358708">
        <id>Q9NYJ8</id>
        <label>TAB2</label>
    </interactant>
    <organismsDiffer>true</organismsDiffer>
    <experiments>5</experiments>
</comment>
<comment type="interaction">
    <interactant intactId="EBI-15957770">
        <id>B7UI22</id>
    </interactant>
    <interactant intactId="EBI-15957777">
        <id>Q8N5C8-1</id>
        <label>TAB3</label>
    </interactant>
    <organismsDiffer>true</organismsDiffer>
    <experiments>7</experiments>
</comment>
<comment type="subcellular location">
    <subcellularLocation>
        <location evidence="2">Secreted</location>
    </subcellularLocation>
    <subcellularLocation>
        <location evidence="2">Host nucleus</location>
    </subcellularLocation>
    <text evidence="2">Secreted via the type III secretion system (T3SS) (PubMed:17984206). Localizes in the nucleus of the infected cells (PubMed:17984206).</text>
</comment>
<comment type="similarity">
    <text evidence="9">Belongs to the NleE/OspZ family.</text>
</comment>
<name>NLEE_ECO27</name>
<accession>B7UI22</accession>
<organism>
    <name type="scientific">Escherichia coli O127:H6 (strain E2348/69 / EPEC)</name>
    <dbReference type="NCBI Taxonomy" id="574521"/>
    <lineage>
        <taxon>Bacteria</taxon>
        <taxon>Pseudomonadati</taxon>
        <taxon>Pseudomonadota</taxon>
        <taxon>Gammaproteobacteria</taxon>
        <taxon>Enterobacterales</taxon>
        <taxon>Enterobacteriaceae</taxon>
        <taxon>Escherichia</taxon>
    </lineage>
</organism>
<proteinExistence type="evidence at protein level"/>
<protein>
    <recommendedName>
        <fullName evidence="9">Cysteine S-methyltransferase NleE</fullName>
        <ecNumber evidence="5 6">2.1.1.-</ecNumber>
    </recommendedName>
    <alternativeName>
        <fullName evidence="8">Effector protein NleE</fullName>
    </alternativeName>
    <alternativeName>
        <fullName evidence="8">Non-LEE-encoded type III effector E</fullName>
    </alternativeName>
</protein>
<feature type="chain" id="PRO_0000452524" description="Cysteine S-methyltransferase NleE">
    <location>
        <begin position="1"/>
        <end position="224"/>
    </location>
</feature>
<feature type="region of interest" description="Interaction with host proteins TAB2, TAB3 and ZRANB3" evidence="7">
    <location>
        <begin position="49"/>
        <end position="52"/>
    </location>
</feature>
<feature type="binding site" evidence="1">
    <location>
        <position position="92"/>
    </location>
    <ligand>
        <name>S-adenosyl-L-methionine</name>
        <dbReference type="ChEBI" id="CHEBI:59789"/>
    </ligand>
</feature>
<feature type="binding site" evidence="1">
    <location>
        <position position="98"/>
    </location>
    <ligand>
        <name>S-adenosyl-L-methionine</name>
        <dbReference type="ChEBI" id="CHEBI:59789"/>
    </ligand>
</feature>
<feature type="binding site" evidence="1">
    <location>
        <position position="107"/>
    </location>
    <ligand>
        <name>S-adenosyl-L-methionine</name>
        <dbReference type="ChEBI" id="CHEBI:59789"/>
    </ligand>
</feature>
<feature type="binding site" evidence="1">
    <location>
        <position position="111"/>
    </location>
    <ligand>
        <name>S-adenosyl-L-methionine</name>
        <dbReference type="ChEBI" id="CHEBI:59789"/>
    </ligand>
</feature>
<feature type="binding site" evidence="1">
    <location>
        <position position="204"/>
    </location>
    <ligand>
        <name>S-adenosyl-L-methionine</name>
        <dbReference type="ChEBI" id="CHEBI:59789"/>
    </ligand>
</feature>
<feature type="binding site" evidence="1">
    <location>
        <position position="208"/>
    </location>
    <ligand>
        <name>S-adenosyl-L-methionine</name>
        <dbReference type="ChEBI" id="CHEBI:59789"/>
    </ligand>
</feature>
<feature type="mutagenesis site" description="Abolished interaction with host proteins TAB2, TAB3 and ZRANB3." evidence="7">
    <original>GITR</original>
    <variation>AAAA</variation>
    <location>
        <begin position="49"/>
        <end position="52"/>
    </location>
</feature>
<feature type="mutagenesis site" description="Abolished cysteine methyltransferase activity." evidence="5 6">
    <original>R</original>
    <variation>A</variation>
    <location>
        <position position="107"/>
    </location>
</feature>
<feature type="mutagenesis site" description="Abolished cysteine methyltransferase activity." evidence="6">
    <original>E</original>
    <variation>A</variation>
    <location>
        <position position="191"/>
    </location>
</feature>
<feature type="mutagenesis site" description="Abolished cysteine methyltransferase activity and ability to inhibit host cell NF-kappa-B activation. Does not affect interaction with host protein TAB3." evidence="3 5 7">
    <location>
        <begin position="209"/>
        <end position="214"/>
    </location>
</feature>
<feature type="mutagenesis site" description="Abolished cysteine methyltransferase activity." evidence="5 6">
    <original>Y</original>
    <variation>A</variation>
    <variation>D</variation>
    <location>
        <position position="212"/>
    </location>
</feature>
<evidence type="ECO:0000250" key="1">
    <source>
        <dbReference type="UniProtKB" id="Q7DBA6"/>
    </source>
</evidence>
<evidence type="ECO:0000269" key="2">
    <source>
    </source>
</evidence>
<evidence type="ECO:0000269" key="3">
    <source>
    </source>
</evidence>
<evidence type="ECO:0000269" key="4">
    <source>
    </source>
</evidence>
<evidence type="ECO:0000269" key="5">
    <source>
    </source>
</evidence>
<evidence type="ECO:0000269" key="6">
    <source>
    </source>
</evidence>
<evidence type="ECO:0000269" key="7">
    <source>
    </source>
</evidence>
<evidence type="ECO:0000303" key="8">
    <source>
    </source>
</evidence>
<evidence type="ECO:0000305" key="9"/>